<dbReference type="EC" id="2.3.2.27"/>
<dbReference type="EMBL" id="AL132965">
    <property type="protein sequence ID" value="CAB66919.1"/>
    <property type="status" value="ALT_SEQ"/>
    <property type="molecule type" value="Genomic_DNA"/>
</dbReference>
<dbReference type="EMBL" id="CP002686">
    <property type="protein sequence ID" value="AEE78593.1"/>
    <property type="molecule type" value="Genomic_DNA"/>
</dbReference>
<dbReference type="EMBL" id="BT029174">
    <property type="protein sequence ID" value="ABJ17109.1"/>
    <property type="molecule type" value="mRNA"/>
</dbReference>
<dbReference type="EMBL" id="AY084697">
    <property type="protein sequence ID" value="AAM61258.1"/>
    <property type="molecule type" value="mRNA"/>
</dbReference>
<dbReference type="PIR" id="T46047">
    <property type="entry name" value="T46047"/>
</dbReference>
<dbReference type="RefSeq" id="NP_566927.1">
    <property type="nucleotide sequence ID" value="NM_114841.4"/>
</dbReference>
<dbReference type="SMR" id="Q058P4"/>
<dbReference type="BioGRID" id="9461">
    <property type="interactions" value="5"/>
</dbReference>
<dbReference type="FunCoup" id="Q058P4">
    <property type="interactions" value="567"/>
</dbReference>
<dbReference type="IntAct" id="Q058P4">
    <property type="interactions" value="5"/>
</dbReference>
<dbReference type="STRING" id="3702.Q058P4"/>
<dbReference type="iPTMnet" id="Q058P4"/>
<dbReference type="PaxDb" id="3702-AT3G49810.1"/>
<dbReference type="ProteomicsDB" id="226108"/>
<dbReference type="EnsemblPlants" id="AT3G49810.1">
    <property type="protein sequence ID" value="AT3G49810.1"/>
    <property type="gene ID" value="AT3G49810"/>
</dbReference>
<dbReference type="GeneID" id="824143"/>
<dbReference type="Gramene" id="AT3G49810.1">
    <property type="protein sequence ID" value="AT3G49810.1"/>
    <property type="gene ID" value="AT3G49810"/>
</dbReference>
<dbReference type="KEGG" id="ath:AT3G49810"/>
<dbReference type="Araport" id="AT3G49810"/>
<dbReference type="TAIR" id="AT3G49810">
    <property type="gene designation" value="ATPUB30"/>
</dbReference>
<dbReference type="eggNOG" id="ENOG502QTEJ">
    <property type="taxonomic scope" value="Eukaryota"/>
</dbReference>
<dbReference type="HOGENOM" id="CLU_006348_1_2_1"/>
<dbReference type="InParanoid" id="Q058P4"/>
<dbReference type="OMA" id="RSNIHKW"/>
<dbReference type="PhylomeDB" id="Q058P4"/>
<dbReference type="UniPathway" id="UPA00143"/>
<dbReference type="PRO" id="PR:Q058P4"/>
<dbReference type="Proteomes" id="UP000006548">
    <property type="component" value="Chromosome 3"/>
</dbReference>
<dbReference type="ExpressionAtlas" id="Q058P4">
    <property type="expression patterns" value="baseline and differential"/>
</dbReference>
<dbReference type="GO" id="GO:0061630">
    <property type="term" value="F:ubiquitin protein ligase activity"/>
    <property type="evidence" value="ECO:0000314"/>
    <property type="project" value="TAIR"/>
</dbReference>
<dbReference type="GO" id="GO:0071472">
    <property type="term" value="P:cellular response to salt stress"/>
    <property type="evidence" value="ECO:0000270"/>
    <property type="project" value="TAIR"/>
</dbReference>
<dbReference type="GO" id="GO:1901001">
    <property type="term" value="P:negative regulation of response to salt stress"/>
    <property type="evidence" value="ECO:0000315"/>
    <property type="project" value="TAIR"/>
</dbReference>
<dbReference type="GO" id="GO:0016567">
    <property type="term" value="P:protein ubiquitination"/>
    <property type="evidence" value="ECO:0007669"/>
    <property type="project" value="UniProtKB-UniPathway"/>
</dbReference>
<dbReference type="CDD" id="cd16664">
    <property type="entry name" value="RING-Ubox_PUB"/>
    <property type="match status" value="1"/>
</dbReference>
<dbReference type="FunFam" id="3.30.40.10:FF:000502">
    <property type="entry name" value="RING-type E3 ubiquitin transferase"/>
    <property type="match status" value="1"/>
</dbReference>
<dbReference type="Gene3D" id="1.25.10.10">
    <property type="entry name" value="Leucine-rich Repeat Variant"/>
    <property type="match status" value="1"/>
</dbReference>
<dbReference type="Gene3D" id="3.30.40.10">
    <property type="entry name" value="Zinc/RING finger domain, C3HC4 (zinc finger)"/>
    <property type="match status" value="1"/>
</dbReference>
<dbReference type="InterPro" id="IPR011989">
    <property type="entry name" value="ARM-like"/>
</dbReference>
<dbReference type="InterPro" id="IPR016024">
    <property type="entry name" value="ARM-type_fold"/>
</dbReference>
<dbReference type="InterPro" id="IPR045185">
    <property type="entry name" value="PUB22/23/24-like"/>
</dbReference>
<dbReference type="InterPro" id="IPR045210">
    <property type="entry name" value="RING-Ubox_PUB"/>
</dbReference>
<dbReference type="InterPro" id="IPR003613">
    <property type="entry name" value="Ubox_domain"/>
</dbReference>
<dbReference type="InterPro" id="IPR013083">
    <property type="entry name" value="Znf_RING/FYVE/PHD"/>
</dbReference>
<dbReference type="PANTHER" id="PTHR22849:SF151">
    <property type="entry name" value="U-BOX DOMAIN-CONTAINING PROTEIN 30"/>
    <property type="match status" value="1"/>
</dbReference>
<dbReference type="PANTHER" id="PTHR22849">
    <property type="entry name" value="WDSAM1 PROTEIN"/>
    <property type="match status" value="1"/>
</dbReference>
<dbReference type="Pfam" id="PF04564">
    <property type="entry name" value="U-box"/>
    <property type="match status" value="1"/>
</dbReference>
<dbReference type="SMART" id="SM00504">
    <property type="entry name" value="Ubox"/>
    <property type="match status" value="1"/>
</dbReference>
<dbReference type="SUPFAM" id="SSF48371">
    <property type="entry name" value="ARM repeat"/>
    <property type="match status" value="1"/>
</dbReference>
<dbReference type="SUPFAM" id="SSF57850">
    <property type="entry name" value="RING/U-box"/>
    <property type="match status" value="1"/>
</dbReference>
<dbReference type="PROSITE" id="PS51698">
    <property type="entry name" value="U_BOX"/>
    <property type="match status" value="1"/>
</dbReference>
<evidence type="ECO:0000250" key="1"/>
<evidence type="ECO:0000305" key="2"/>
<comment type="function">
    <text evidence="1">Functions as an E3 ubiquitin ligase.</text>
</comment>
<comment type="catalytic activity">
    <reaction>
        <text>S-ubiquitinyl-[E2 ubiquitin-conjugating enzyme]-L-cysteine + [acceptor protein]-L-lysine = [E2 ubiquitin-conjugating enzyme]-L-cysteine + N(6)-ubiquitinyl-[acceptor protein]-L-lysine.</text>
        <dbReference type="EC" id="2.3.2.27"/>
    </reaction>
</comment>
<comment type="pathway">
    <text>Protein modification; protein ubiquitination.</text>
</comment>
<comment type="interaction">
    <interactant intactId="EBI-4442587">
        <id>Q058P4</id>
    </interactant>
    <interactant intactId="EBI-4426649">
        <id>Q17TI5</id>
        <label>BRX</label>
    </interactant>
    <organismsDiffer>false</organismsDiffer>
    <experiments>3</experiments>
</comment>
<comment type="interaction">
    <interactant intactId="EBI-4442587">
        <id>Q058P4</id>
    </interactant>
    <interactant intactId="EBI-25506855">
        <id>O23160</id>
        <label>MYB73</label>
    </interactant>
    <organismsDiffer>false</organismsDiffer>
    <experiments>3</experiments>
</comment>
<comment type="sequence caution" evidence="2">
    <conflict type="erroneous gene model prediction">
        <sequence resource="EMBL-CDS" id="CAB66919"/>
    </conflict>
</comment>
<organism>
    <name type="scientific">Arabidopsis thaliana</name>
    <name type="common">Mouse-ear cress</name>
    <dbReference type="NCBI Taxonomy" id="3702"/>
    <lineage>
        <taxon>Eukaryota</taxon>
        <taxon>Viridiplantae</taxon>
        <taxon>Streptophyta</taxon>
        <taxon>Embryophyta</taxon>
        <taxon>Tracheophyta</taxon>
        <taxon>Spermatophyta</taxon>
        <taxon>Magnoliopsida</taxon>
        <taxon>eudicotyledons</taxon>
        <taxon>Gunneridae</taxon>
        <taxon>Pentapetalae</taxon>
        <taxon>rosids</taxon>
        <taxon>malvids</taxon>
        <taxon>Brassicales</taxon>
        <taxon>Brassicaceae</taxon>
        <taxon>Camelineae</taxon>
        <taxon>Arabidopsis</taxon>
    </lineage>
</organism>
<proteinExistence type="evidence at protein level"/>
<gene>
    <name type="primary">PUB30</name>
    <name type="ordered locus">At3g49810</name>
    <name type="ORF">T16K5.160</name>
</gene>
<feature type="chain" id="PRO_0000322174" description="U-box domain-containing protein 30">
    <location>
        <begin position="1"/>
        <end position="448"/>
    </location>
</feature>
<feature type="domain" description="U-box">
    <location>
        <begin position="63"/>
        <end position="137"/>
    </location>
</feature>
<feature type="repeat" description="ARM 1">
    <location>
        <begin position="179"/>
        <end position="219"/>
    </location>
</feature>
<feature type="repeat" description="ARM 2">
    <location>
        <begin position="221"/>
        <end position="260"/>
    </location>
</feature>
<feature type="sequence conflict" description="In Ref. 4; AAM61258." evidence="2" ref="4">
    <original>I</original>
    <variation>V</variation>
    <location>
        <position position="176"/>
    </location>
</feature>
<feature type="sequence conflict" description="In Ref. 4; AAM61258." evidence="2" ref="4">
    <original>P</original>
    <variation>Q</variation>
    <location>
        <position position="325"/>
    </location>
</feature>
<reference key="1">
    <citation type="journal article" date="2000" name="Nature">
        <title>Sequence and analysis of chromosome 3 of the plant Arabidopsis thaliana.</title>
        <authorList>
            <person name="Salanoubat M."/>
            <person name="Lemcke K."/>
            <person name="Rieger M."/>
            <person name="Ansorge W."/>
            <person name="Unseld M."/>
            <person name="Fartmann B."/>
            <person name="Valle G."/>
            <person name="Bloecker H."/>
            <person name="Perez-Alonso M."/>
            <person name="Obermaier B."/>
            <person name="Delseny M."/>
            <person name="Boutry M."/>
            <person name="Grivell L.A."/>
            <person name="Mache R."/>
            <person name="Puigdomenech P."/>
            <person name="De Simone V."/>
            <person name="Choisne N."/>
            <person name="Artiguenave F."/>
            <person name="Robert C."/>
            <person name="Brottier P."/>
            <person name="Wincker P."/>
            <person name="Cattolico L."/>
            <person name="Weissenbach J."/>
            <person name="Saurin W."/>
            <person name="Quetier F."/>
            <person name="Schaefer M."/>
            <person name="Mueller-Auer S."/>
            <person name="Gabel C."/>
            <person name="Fuchs M."/>
            <person name="Benes V."/>
            <person name="Wurmbach E."/>
            <person name="Drzonek H."/>
            <person name="Erfle H."/>
            <person name="Jordan N."/>
            <person name="Bangert S."/>
            <person name="Wiedelmann R."/>
            <person name="Kranz H."/>
            <person name="Voss H."/>
            <person name="Holland R."/>
            <person name="Brandt P."/>
            <person name="Nyakatura G."/>
            <person name="Vezzi A."/>
            <person name="D'Angelo M."/>
            <person name="Pallavicini A."/>
            <person name="Toppo S."/>
            <person name="Simionati B."/>
            <person name="Conrad A."/>
            <person name="Hornischer K."/>
            <person name="Kauer G."/>
            <person name="Loehnert T.-H."/>
            <person name="Nordsiek G."/>
            <person name="Reichelt J."/>
            <person name="Scharfe M."/>
            <person name="Schoen O."/>
            <person name="Bargues M."/>
            <person name="Terol J."/>
            <person name="Climent J."/>
            <person name="Navarro P."/>
            <person name="Collado C."/>
            <person name="Perez-Perez A."/>
            <person name="Ottenwaelder B."/>
            <person name="Duchemin D."/>
            <person name="Cooke R."/>
            <person name="Laudie M."/>
            <person name="Berger-Llauro C."/>
            <person name="Purnelle B."/>
            <person name="Masuy D."/>
            <person name="de Haan M."/>
            <person name="Maarse A.C."/>
            <person name="Alcaraz J.-P."/>
            <person name="Cottet A."/>
            <person name="Casacuberta E."/>
            <person name="Monfort A."/>
            <person name="Argiriou A."/>
            <person name="Flores M."/>
            <person name="Liguori R."/>
            <person name="Vitale D."/>
            <person name="Mannhaupt G."/>
            <person name="Haase D."/>
            <person name="Schoof H."/>
            <person name="Rudd S."/>
            <person name="Zaccaria P."/>
            <person name="Mewes H.-W."/>
            <person name="Mayer K.F.X."/>
            <person name="Kaul S."/>
            <person name="Town C.D."/>
            <person name="Koo H.L."/>
            <person name="Tallon L.J."/>
            <person name="Jenkins J."/>
            <person name="Rooney T."/>
            <person name="Rizzo M."/>
            <person name="Walts A."/>
            <person name="Utterback T."/>
            <person name="Fujii C.Y."/>
            <person name="Shea T.P."/>
            <person name="Creasy T.H."/>
            <person name="Haas B."/>
            <person name="Maiti R."/>
            <person name="Wu D."/>
            <person name="Peterson J."/>
            <person name="Van Aken S."/>
            <person name="Pai G."/>
            <person name="Militscher J."/>
            <person name="Sellers P."/>
            <person name="Gill J.E."/>
            <person name="Feldblyum T.V."/>
            <person name="Preuss D."/>
            <person name="Lin X."/>
            <person name="Nierman W.C."/>
            <person name="Salzberg S.L."/>
            <person name="White O."/>
            <person name="Venter J.C."/>
            <person name="Fraser C.M."/>
            <person name="Kaneko T."/>
            <person name="Nakamura Y."/>
            <person name="Sato S."/>
            <person name="Kato T."/>
            <person name="Asamizu E."/>
            <person name="Sasamoto S."/>
            <person name="Kimura T."/>
            <person name="Idesawa K."/>
            <person name="Kawashima K."/>
            <person name="Kishida Y."/>
            <person name="Kiyokawa C."/>
            <person name="Kohara M."/>
            <person name="Matsumoto M."/>
            <person name="Matsuno A."/>
            <person name="Muraki A."/>
            <person name="Nakayama S."/>
            <person name="Nakazaki N."/>
            <person name="Shinpo S."/>
            <person name="Takeuchi C."/>
            <person name="Wada T."/>
            <person name="Watanabe A."/>
            <person name="Yamada M."/>
            <person name="Yasuda M."/>
            <person name="Tabata S."/>
        </authorList>
    </citation>
    <scope>NUCLEOTIDE SEQUENCE [LARGE SCALE GENOMIC DNA]</scope>
    <source>
        <strain>cv. Columbia</strain>
    </source>
</reference>
<reference key="2">
    <citation type="journal article" date="2017" name="Plant J.">
        <title>Araport11: a complete reannotation of the Arabidopsis thaliana reference genome.</title>
        <authorList>
            <person name="Cheng C.Y."/>
            <person name="Krishnakumar V."/>
            <person name="Chan A.P."/>
            <person name="Thibaud-Nissen F."/>
            <person name="Schobel S."/>
            <person name="Town C.D."/>
        </authorList>
    </citation>
    <scope>GENOME REANNOTATION</scope>
    <source>
        <strain>cv. Columbia</strain>
    </source>
</reference>
<reference key="3">
    <citation type="submission" date="2006-10" db="EMBL/GenBank/DDBJ databases">
        <title>Arabidopsis ORF Clone.</title>
        <authorList>
            <person name="Bautista V.R."/>
            <person name="Kim C.J."/>
            <person name="Chen H."/>
            <person name="Quinitio C."/>
            <person name="Ecker J.R."/>
        </authorList>
    </citation>
    <scope>NUCLEOTIDE SEQUENCE [LARGE SCALE MRNA]</scope>
    <source>
        <strain>cv. Columbia</strain>
    </source>
</reference>
<reference key="4">
    <citation type="submission" date="2002-03" db="EMBL/GenBank/DDBJ databases">
        <title>Full-length cDNA from Arabidopsis thaliana.</title>
        <authorList>
            <person name="Brover V.V."/>
            <person name="Troukhan M.E."/>
            <person name="Alexandrov N.A."/>
            <person name="Lu Y.-P."/>
            <person name="Flavell R.B."/>
            <person name="Feldmann K.A."/>
        </authorList>
    </citation>
    <scope>NUCLEOTIDE SEQUENCE [LARGE SCALE MRNA]</scope>
</reference>
<reference key="5">
    <citation type="journal article" date="2001" name="Trends Plant Sci.">
        <title>The U-box protein family in plants.</title>
        <authorList>
            <person name="Azevedo C."/>
            <person name="Santos-Rosa M.J."/>
            <person name="Shirasu K."/>
        </authorList>
    </citation>
    <scope>GENE FAMILY ORGANIZATION</scope>
    <scope>NOMENCLATURE</scope>
</reference>
<reference key="6">
    <citation type="journal article" date="2004" name="Plant Physiol.">
        <title>A large complement of the predicted Arabidopsis ARM repeat proteins are members of the U-box E3 ubiquitin ligase family.</title>
        <authorList>
            <person name="Mudgil Y."/>
            <person name="Shiu S.-H."/>
            <person name="Stone S.L."/>
            <person name="Salt J.N."/>
            <person name="Goring D.R."/>
        </authorList>
    </citation>
    <scope>GENE FAMILY ORGANIZATION</scope>
</reference>
<accession>Q058P4</accession>
<accession>Q8LFR0</accession>
<accession>Q9M2X7</accession>
<sequence length="448" mass="48994">MPMFQPLKRDGLIGFEGGGDGQVLDLDTAVKDGVLGGVNGGGVGVVDEKLDLKKMIKELDLQDIPSVFICPISLEPMQDPVTLCTGQTYERLNIHKWFNLGHLTCPTTMQELWDDTVTPNKTLHHLIYTWFSQKYVLMKKRSEDVQGRAIEILGTLKKAKGQARVHALSELKQIVIAHLMARKTVVEEGGVSVISSLLGPFTSHAVGSEVVAILVSLDLDSDSKSGLMQPAKVSLIVDMLNDGSNETKINCARLIRGLVEEKGFRAELVSSHSLLVGLMRLVKDKRHRNGVSPALRLLKPISVHKQVRSLMVSIGAVPQLVDILPSLDPECLELALFVLDALCTDVEGRVAVKDSANTIPYTVRVLMRVSENCTNYALSILWSVCKLAPEECSPLAVEVGLAAKLLLVIQSGCDAALKQRSAELLKLCSLHYSDTMFISKCKLTRTIQ</sequence>
<protein>
    <recommendedName>
        <fullName>U-box domain-containing protein 30</fullName>
        <ecNumber>2.3.2.27</ecNumber>
    </recommendedName>
    <alternativeName>
        <fullName>Plant U-box protein 30</fullName>
    </alternativeName>
    <alternativeName>
        <fullName evidence="2">RING-type E3 ubiquitin transferase PUB30</fullName>
    </alternativeName>
</protein>
<keyword id="KW-1185">Reference proteome</keyword>
<keyword id="KW-0677">Repeat</keyword>
<keyword id="KW-0808">Transferase</keyword>
<keyword id="KW-0833">Ubl conjugation pathway</keyword>
<name>PUB30_ARATH</name>